<gene>
    <name type="primary">HBA</name>
</gene>
<organism>
    <name type="scientific">Felis catus</name>
    <name type="common">Cat</name>
    <name type="synonym">Felis silvestris catus</name>
    <dbReference type="NCBI Taxonomy" id="9685"/>
    <lineage>
        <taxon>Eukaryota</taxon>
        <taxon>Metazoa</taxon>
        <taxon>Chordata</taxon>
        <taxon>Craniata</taxon>
        <taxon>Vertebrata</taxon>
        <taxon>Euteleostomi</taxon>
        <taxon>Mammalia</taxon>
        <taxon>Eutheria</taxon>
        <taxon>Laurasiatheria</taxon>
        <taxon>Carnivora</taxon>
        <taxon>Feliformia</taxon>
        <taxon>Felidae</taxon>
        <taxon>Felinae</taxon>
        <taxon>Felis</taxon>
    </lineage>
</organism>
<accession>P07405</accession>
<protein>
    <recommendedName>
        <fullName>Hemoglobin subunit alpha</fullName>
    </recommendedName>
    <alternativeName>
        <fullName>Alpha-globin</fullName>
    </alternativeName>
    <alternativeName>
        <fullName>Hemoglobin alpha chain</fullName>
    </alternativeName>
    <component>
        <recommendedName>
            <fullName evidence="2">Hemopressin</fullName>
        </recommendedName>
    </component>
</protein>
<dbReference type="PIR" id="A25203">
    <property type="entry name" value="A25203"/>
</dbReference>
<dbReference type="PDB" id="3D4X">
    <property type="method" value="X-ray"/>
    <property type="resolution" value="2.20 A"/>
    <property type="chains" value="A/C=1-141"/>
</dbReference>
<dbReference type="PDB" id="3GQP">
    <property type="method" value="X-ray"/>
    <property type="resolution" value="2.00 A"/>
    <property type="chains" value="A/C=1-141"/>
</dbReference>
<dbReference type="PDB" id="3GQR">
    <property type="method" value="X-ray"/>
    <property type="resolution" value="2.40 A"/>
    <property type="chains" value="A/C/E/G=1-141"/>
</dbReference>
<dbReference type="PDB" id="3GYS">
    <property type="method" value="X-ray"/>
    <property type="resolution" value="2.90 A"/>
    <property type="chains" value="A/C/E/G=1-141"/>
</dbReference>
<dbReference type="PDBsum" id="3D4X"/>
<dbReference type="PDBsum" id="3GQP"/>
<dbReference type="PDBsum" id="3GQR"/>
<dbReference type="PDBsum" id="3GYS"/>
<dbReference type="SMR" id="P07405"/>
<dbReference type="FunCoup" id="P07405">
    <property type="interactions" value="2"/>
</dbReference>
<dbReference type="PaxDb" id="9685-ENSFCAP00000009652"/>
<dbReference type="eggNOG" id="KOG3378">
    <property type="taxonomic scope" value="Eukaryota"/>
</dbReference>
<dbReference type="HOGENOM" id="CLU_003827_10_2_1"/>
<dbReference type="InParanoid" id="P07405"/>
<dbReference type="TreeFam" id="TF332328"/>
<dbReference type="EvolutionaryTrace" id="P07405"/>
<dbReference type="Proteomes" id="UP000011712">
    <property type="component" value="Unplaced"/>
</dbReference>
<dbReference type="GO" id="GO:0031838">
    <property type="term" value="C:haptoglobin-hemoglobin complex"/>
    <property type="evidence" value="ECO:0000318"/>
    <property type="project" value="GO_Central"/>
</dbReference>
<dbReference type="GO" id="GO:0005833">
    <property type="term" value="C:hemoglobin complex"/>
    <property type="evidence" value="ECO:0000318"/>
    <property type="project" value="GO_Central"/>
</dbReference>
<dbReference type="GO" id="GO:0020037">
    <property type="term" value="F:heme binding"/>
    <property type="evidence" value="ECO:0000318"/>
    <property type="project" value="GO_Central"/>
</dbReference>
<dbReference type="GO" id="GO:0005506">
    <property type="term" value="F:iron ion binding"/>
    <property type="evidence" value="ECO:0007669"/>
    <property type="project" value="InterPro"/>
</dbReference>
<dbReference type="GO" id="GO:0019825">
    <property type="term" value="F:oxygen binding"/>
    <property type="evidence" value="ECO:0000318"/>
    <property type="project" value="GO_Central"/>
</dbReference>
<dbReference type="GO" id="GO:0005344">
    <property type="term" value="F:oxygen carrier activity"/>
    <property type="evidence" value="ECO:0000318"/>
    <property type="project" value="GO_Central"/>
</dbReference>
<dbReference type="GO" id="GO:0098869">
    <property type="term" value="P:cellular oxidant detoxification"/>
    <property type="evidence" value="ECO:0007669"/>
    <property type="project" value="GOC"/>
</dbReference>
<dbReference type="GO" id="GO:0042744">
    <property type="term" value="P:hydrogen peroxide catabolic process"/>
    <property type="evidence" value="ECO:0000318"/>
    <property type="project" value="GO_Central"/>
</dbReference>
<dbReference type="CDD" id="cd08927">
    <property type="entry name" value="Hb-alpha-like"/>
    <property type="match status" value="1"/>
</dbReference>
<dbReference type="FunFam" id="1.10.490.10:FF:000002">
    <property type="entry name" value="Hemoglobin subunit alpha"/>
    <property type="match status" value="1"/>
</dbReference>
<dbReference type="Gene3D" id="1.10.490.10">
    <property type="entry name" value="Globins"/>
    <property type="match status" value="1"/>
</dbReference>
<dbReference type="InterPro" id="IPR000971">
    <property type="entry name" value="Globin"/>
</dbReference>
<dbReference type="InterPro" id="IPR009050">
    <property type="entry name" value="Globin-like_sf"/>
</dbReference>
<dbReference type="InterPro" id="IPR012292">
    <property type="entry name" value="Globin/Proto"/>
</dbReference>
<dbReference type="InterPro" id="IPR002338">
    <property type="entry name" value="Hemoglobin_a-typ"/>
</dbReference>
<dbReference type="InterPro" id="IPR050056">
    <property type="entry name" value="Hemoglobin_oxygen_transport"/>
</dbReference>
<dbReference type="InterPro" id="IPR002339">
    <property type="entry name" value="Hemoglobin_pi"/>
</dbReference>
<dbReference type="PANTHER" id="PTHR11442">
    <property type="entry name" value="HEMOGLOBIN FAMILY MEMBER"/>
    <property type="match status" value="1"/>
</dbReference>
<dbReference type="PANTHER" id="PTHR11442:SF48">
    <property type="entry name" value="HEMOGLOBIN SUBUNIT ALPHA"/>
    <property type="match status" value="1"/>
</dbReference>
<dbReference type="Pfam" id="PF00042">
    <property type="entry name" value="Globin"/>
    <property type="match status" value="1"/>
</dbReference>
<dbReference type="PRINTS" id="PR00612">
    <property type="entry name" value="ALPHAHAEM"/>
</dbReference>
<dbReference type="PRINTS" id="PR00815">
    <property type="entry name" value="PIHAEM"/>
</dbReference>
<dbReference type="SUPFAM" id="SSF46458">
    <property type="entry name" value="Globin-like"/>
    <property type="match status" value="1"/>
</dbReference>
<dbReference type="PROSITE" id="PS01033">
    <property type="entry name" value="GLOBIN"/>
    <property type="match status" value="1"/>
</dbReference>
<proteinExistence type="evidence at protein level"/>
<reference key="1">
    <citation type="journal article" date="1985" name="Biol. Chem. Hoppe-Seyler">
        <title>The primary structure of hemoglobins from the domestic cat (Felis catus, Felidae).</title>
        <authorList>
            <person name="Abbasi A."/>
            <person name="Braunitzer G."/>
        </authorList>
    </citation>
    <scope>PROTEIN SEQUENCE</scope>
</reference>
<evidence type="ECO:0000250" key="1">
    <source>
        <dbReference type="UniProtKB" id="P01942"/>
    </source>
</evidence>
<evidence type="ECO:0000250" key="2">
    <source>
        <dbReference type="UniProtKB" id="P01946"/>
    </source>
</evidence>
<evidence type="ECO:0000250" key="3">
    <source>
        <dbReference type="UniProtKB" id="P69905"/>
    </source>
</evidence>
<evidence type="ECO:0000255" key="4">
    <source>
        <dbReference type="PROSITE-ProRule" id="PRU00238"/>
    </source>
</evidence>
<evidence type="ECO:0007829" key="5">
    <source>
        <dbReference type="PDB" id="3D4X"/>
    </source>
</evidence>
<evidence type="ECO:0007829" key="6">
    <source>
        <dbReference type="PDB" id="3GQP"/>
    </source>
</evidence>
<keyword id="KW-0002">3D-structure</keyword>
<keyword id="KW-0007">Acetylation</keyword>
<keyword id="KW-0903">Direct protein sequencing</keyword>
<keyword id="KW-0349">Heme</keyword>
<keyword id="KW-0408">Iron</keyword>
<keyword id="KW-0479">Metal-binding</keyword>
<keyword id="KW-0561">Oxygen transport</keyword>
<keyword id="KW-0597">Phosphoprotein</keyword>
<keyword id="KW-1185">Reference proteome</keyword>
<keyword id="KW-0813">Transport</keyword>
<comment type="function">
    <text>Involved in oxygen transport from the lung to the various peripheral tissues.</text>
</comment>
<comment type="function">
    <molecule>Hemopressin</molecule>
    <text evidence="2">Hemopressin acts as an antagonist peptide of the cannabinoid receptor CNR1. Hemopressin-binding efficiently blocks cannabinoid receptor CNR1 and subsequent signaling.</text>
</comment>
<comment type="subunit">
    <text>Heterotetramer of two alpha chains and two beta chains.</text>
</comment>
<comment type="tissue specificity">
    <text>Red blood cells.</text>
</comment>
<comment type="similarity">
    <text evidence="4">Belongs to the globin family.</text>
</comment>
<feature type="chain" id="PRO_0000052635" description="Hemoglobin subunit alpha">
    <location>
        <begin position="1"/>
        <end position="141"/>
    </location>
</feature>
<feature type="peptide" id="PRO_0000455877" description="Hemopressin" evidence="2">
    <location>
        <begin position="95"/>
        <end position="103"/>
    </location>
</feature>
<feature type="domain" description="Globin" evidence="4">
    <location>
        <begin position="1"/>
        <end position="141"/>
    </location>
</feature>
<feature type="binding site" evidence="4">
    <location>
        <position position="58"/>
    </location>
    <ligand>
        <name>O2</name>
        <dbReference type="ChEBI" id="CHEBI:15379"/>
    </ligand>
</feature>
<feature type="binding site" description="proximal binding residue" evidence="4">
    <location>
        <position position="87"/>
    </location>
    <ligand>
        <name>heme b</name>
        <dbReference type="ChEBI" id="CHEBI:60344"/>
    </ligand>
    <ligandPart>
        <name>Fe</name>
        <dbReference type="ChEBI" id="CHEBI:18248"/>
    </ligandPart>
</feature>
<feature type="modified residue" description="Phosphoserine" evidence="3">
    <location>
        <position position="3"/>
    </location>
</feature>
<feature type="modified residue" description="N6-succinyllysine" evidence="1">
    <location>
        <position position="7"/>
    </location>
</feature>
<feature type="modified residue" description="N6-succinyllysine" evidence="1">
    <location>
        <position position="11"/>
    </location>
</feature>
<feature type="modified residue" description="N6-acetyllysine; alternate" evidence="3">
    <location>
        <position position="16"/>
    </location>
</feature>
<feature type="modified residue" description="N6-succinyllysine; alternate" evidence="1">
    <location>
        <position position="16"/>
    </location>
</feature>
<feature type="modified residue" description="Phosphotyrosine" evidence="3">
    <location>
        <position position="24"/>
    </location>
</feature>
<feature type="modified residue" description="Phosphoserine" evidence="3">
    <location>
        <position position="35"/>
    </location>
</feature>
<feature type="modified residue" description="N6-succinyllysine" evidence="1">
    <location>
        <position position="40"/>
    </location>
</feature>
<feature type="modified residue" description="Phosphoserine" evidence="3">
    <location>
        <position position="49"/>
    </location>
</feature>
<feature type="modified residue" description="Phosphoserine" evidence="1">
    <location>
        <position position="102"/>
    </location>
</feature>
<feature type="modified residue" description="Phosphothreonine" evidence="1">
    <location>
        <position position="108"/>
    </location>
</feature>
<feature type="modified residue" description="Phosphoserine" evidence="1">
    <location>
        <position position="124"/>
    </location>
</feature>
<feature type="modified residue" description="Phosphothreonine" evidence="1">
    <location>
        <position position="134"/>
    </location>
</feature>
<feature type="modified residue" description="Phosphothreonine" evidence="1">
    <location>
        <position position="137"/>
    </location>
</feature>
<feature type="modified residue" description="Phosphoserine" evidence="1">
    <location>
        <position position="138"/>
    </location>
</feature>
<feature type="helix" evidence="6">
    <location>
        <begin position="4"/>
        <end position="17"/>
    </location>
</feature>
<feature type="helix" evidence="6">
    <location>
        <begin position="18"/>
        <end position="20"/>
    </location>
</feature>
<feature type="helix" evidence="6">
    <location>
        <begin position="21"/>
        <end position="35"/>
    </location>
</feature>
<feature type="helix" evidence="6">
    <location>
        <begin position="37"/>
        <end position="42"/>
    </location>
</feature>
<feature type="helix" evidence="6">
    <location>
        <begin position="53"/>
        <end position="71"/>
    </location>
</feature>
<feature type="turn" evidence="6">
    <location>
        <begin position="72"/>
        <end position="74"/>
    </location>
</feature>
<feature type="helix" evidence="6">
    <location>
        <begin position="76"/>
        <end position="79"/>
    </location>
</feature>
<feature type="helix" evidence="6">
    <location>
        <begin position="81"/>
        <end position="88"/>
    </location>
</feature>
<feature type="helix" evidence="6">
    <location>
        <begin position="96"/>
        <end position="112"/>
    </location>
</feature>
<feature type="turn" evidence="6">
    <location>
        <begin position="114"/>
        <end position="116"/>
    </location>
</feature>
<feature type="helix" evidence="6">
    <location>
        <begin position="119"/>
        <end position="136"/>
    </location>
</feature>
<feature type="turn" evidence="5">
    <location>
        <begin position="137"/>
        <end position="139"/>
    </location>
</feature>
<name>HBA_FELCA</name>
<sequence>VLSAADKSNVKACWGKIGSHAGEYGAEALERTFCSFPTTKTYFPHFDLSHGSAQVKAHGQKVADALTQAVAHMDDLPTAMSALSDLHAYKLRVDPVNFKFLSHCLLVTLACHHPAEFTPAVHASLDKFFSAVSTVLTSKYR</sequence>